<accession>C4K3X0</accession>
<organism>
    <name type="scientific">Hamiltonella defensa subsp. Acyrthosiphon pisum (strain 5AT)</name>
    <dbReference type="NCBI Taxonomy" id="572265"/>
    <lineage>
        <taxon>Bacteria</taxon>
        <taxon>Pseudomonadati</taxon>
        <taxon>Pseudomonadota</taxon>
        <taxon>Gammaproteobacteria</taxon>
        <taxon>Enterobacterales</taxon>
        <taxon>Enterobacteriaceae</taxon>
        <taxon>aphid secondary symbionts</taxon>
        <taxon>Candidatus Hamiltonella</taxon>
    </lineage>
</organism>
<reference key="1">
    <citation type="journal article" date="2009" name="Proc. Natl. Acad. Sci. U.S.A.">
        <title>Hamiltonella defensa, genome evolution of protective bacterial endosymbiont from pathogenic ancestors.</title>
        <authorList>
            <person name="Degnan P.H."/>
            <person name="Yu Y."/>
            <person name="Sisneros N."/>
            <person name="Wing R.A."/>
            <person name="Moran N.A."/>
        </authorList>
    </citation>
    <scope>NUCLEOTIDE SEQUENCE [LARGE SCALE GENOMIC DNA]</scope>
    <source>
        <strain>5AT</strain>
    </source>
</reference>
<sequence>MRPSGRTAQQLRPLTFTRHYTKYAEGAVLVEFGETRVLCTATVEEGVPRFLKGQNKGWITAEYSMLPRSTHQRHARESVKGKQGGRTLEIQRLIARALRAAVDLTKLGEFTIKLDCDVLQADGGTRTAAITGACVALQDALQKMRVEGKLKSNPMKGLVAAVSVGVVGGESICDLEYIEDAIAETDMNVVMIEEGAGRKIIEIQGTAEGAPFSHQQLLELLALADDGIKTIFQAQKKVLEK</sequence>
<proteinExistence type="inferred from homology"/>
<evidence type="ECO:0000255" key="1">
    <source>
        <dbReference type="HAMAP-Rule" id="MF_00564"/>
    </source>
</evidence>
<keyword id="KW-0548">Nucleotidyltransferase</keyword>
<keyword id="KW-0694">RNA-binding</keyword>
<keyword id="KW-0698">rRNA processing</keyword>
<keyword id="KW-0808">Transferase</keyword>
<keyword id="KW-0819">tRNA processing</keyword>
<keyword id="KW-0820">tRNA-binding</keyword>
<protein>
    <recommendedName>
        <fullName evidence="1">Ribonuclease PH</fullName>
        <shortName evidence="1">RNase PH</shortName>
        <ecNumber evidence="1">2.7.7.56</ecNumber>
    </recommendedName>
    <alternativeName>
        <fullName evidence="1">tRNA nucleotidyltransferase</fullName>
    </alternativeName>
</protein>
<gene>
    <name evidence="1" type="primary">rph</name>
    <name type="ordered locus">HDEF_0509</name>
</gene>
<name>RNPH_HAMD5</name>
<feature type="chain" id="PRO_1000212064" description="Ribonuclease PH">
    <location>
        <begin position="1"/>
        <end position="241"/>
    </location>
</feature>
<feature type="binding site" evidence="1">
    <location>
        <position position="86"/>
    </location>
    <ligand>
        <name>phosphate</name>
        <dbReference type="ChEBI" id="CHEBI:43474"/>
        <note>substrate</note>
    </ligand>
</feature>
<feature type="binding site" evidence="1">
    <location>
        <begin position="124"/>
        <end position="126"/>
    </location>
    <ligand>
        <name>phosphate</name>
        <dbReference type="ChEBI" id="CHEBI:43474"/>
        <note>substrate</note>
    </ligand>
</feature>
<comment type="function">
    <text evidence="1">Phosphorolytic 3'-5' exoribonuclease that plays an important role in tRNA 3'-end maturation. Removes nucleotide residues following the 3'-CCA terminus of tRNAs; can also add nucleotides to the ends of RNA molecules by using nucleoside diphosphates as substrates, but this may not be physiologically important. Probably plays a role in initiation of 16S rRNA degradation (leading to ribosome degradation) during starvation.</text>
</comment>
<comment type="catalytic activity">
    <reaction evidence="1">
        <text>tRNA(n+1) + phosphate = tRNA(n) + a ribonucleoside 5'-diphosphate</text>
        <dbReference type="Rhea" id="RHEA:10628"/>
        <dbReference type="Rhea" id="RHEA-COMP:17343"/>
        <dbReference type="Rhea" id="RHEA-COMP:17344"/>
        <dbReference type="ChEBI" id="CHEBI:43474"/>
        <dbReference type="ChEBI" id="CHEBI:57930"/>
        <dbReference type="ChEBI" id="CHEBI:173114"/>
        <dbReference type="EC" id="2.7.7.56"/>
    </reaction>
</comment>
<comment type="subunit">
    <text evidence="1">Homohexameric ring arranged as a trimer of dimers.</text>
</comment>
<comment type="similarity">
    <text evidence="1">Belongs to the RNase PH family.</text>
</comment>
<dbReference type="EC" id="2.7.7.56" evidence="1"/>
<dbReference type="EMBL" id="CP001277">
    <property type="protein sequence ID" value="ACQ67263.1"/>
    <property type="molecule type" value="Genomic_DNA"/>
</dbReference>
<dbReference type="RefSeq" id="WP_012738220.1">
    <property type="nucleotide sequence ID" value="NC_012751.1"/>
</dbReference>
<dbReference type="SMR" id="C4K3X0"/>
<dbReference type="STRING" id="572265.HDEF_0509"/>
<dbReference type="GeneID" id="66260394"/>
<dbReference type="KEGG" id="hde:HDEF_0509"/>
<dbReference type="eggNOG" id="COG0689">
    <property type="taxonomic scope" value="Bacteria"/>
</dbReference>
<dbReference type="HOGENOM" id="CLU_050858_0_0_6"/>
<dbReference type="Proteomes" id="UP000002334">
    <property type="component" value="Chromosome"/>
</dbReference>
<dbReference type="GO" id="GO:0000175">
    <property type="term" value="F:3'-5'-RNA exonuclease activity"/>
    <property type="evidence" value="ECO:0007669"/>
    <property type="project" value="UniProtKB-UniRule"/>
</dbReference>
<dbReference type="GO" id="GO:0000049">
    <property type="term" value="F:tRNA binding"/>
    <property type="evidence" value="ECO:0007669"/>
    <property type="project" value="UniProtKB-UniRule"/>
</dbReference>
<dbReference type="GO" id="GO:0009022">
    <property type="term" value="F:tRNA nucleotidyltransferase activity"/>
    <property type="evidence" value="ECO:0007669"/>
    <property type="project" value="UniProtKB-UniRule"/>
</dbReference>
<dbReference type="GO" id="GO:0016075">
    <property type="term" value="P:rRNA catabolic process"/>
    <property type="evidence" value="ECO:0007669"/>
    <property type="project" value="UniProtKB-UniRule"/>
</dbReference>
<dbReference type="GO" id="GO:0006364">
    <property type="term" value="P:rRNA processing"/>
    <property type="evidence" value="ECO:0007669"/>
    <property type="project" value="UniProtKB-KW"/>
</dbReference>
<dbReference type="GO" id="GO:0008033">
    <property type="term" value="P:tRNA processing"/>
    <property type="evidence" value="ECO:0007669"/>
    <property type="project" value="UniProtKB-UniRule"/>
</dbReference>
<dbReference type="FunFam" id="3.30.230.70:FF:000003">
    <property type="entry name" value="Ribonuclease PH"/>
    <property type="match status" value="1"/>
</dbReference>
<dbReference type="Gene3D" id="3.30.230.70">
    <property type="entry name" value="GHMP Kinase, N-terminal domain"/>
    <property type="match status" value="1"/>
</dbReference>
<dbReference type="HAMAP" id="MF_00564">
    <property type="entry name" value="RNase_PH"/>
    <property type="match status" value="1"/>
</dbReference>
<dbReference type="InterPro" id="IPR001247">
    <property type="entry name" value="ExoRNase_PH_dom1"/>
</dbReference>
<dbReference type="InterPro" id="IPR015847">
    <property type="entry name" value="ExoRNase_PH_dom2"/>
</dbReference>
<dbReference type="InterPro" id="IPR036345">
    <property type="entry name" value="ExoRNase_PH_dom2_sf"/>
</dbReference>
<dbReference type="InterPro" id="IPR027408">
    <property type="entry name" value="PNPase/RNase_PH_dom_sf"/>
</dbReference>
<dbReference type="InterPro" id="IPR020568">
    <property type="entry name" value="Ribosomal_Su5_D2-typ_SF"/>
</dbReference>
<dbReference type="InterPro" id="IPR050080">
    <property type="entry name" value="RNase_PH"/>
</dbReference>
<dbReference type="InterPro" id="IPR002381">
    <property type="entry name" value="RNase_PH_bac-type"/>
</dbReference>
<dbReference type="InterPro" id="IPR018336">
    <property type="entry name" value="RNase_PH_CS"/>
</dbReference>
<dbReference type="NCBIfam" id="TIGR01966">
    <property type="entry name" value="RNasePH"/>
    <property type="match status" value="1"/>
</dbReference>
<dbReference type="PANTHER" id="PTHR11953">
    <property type="entry name" value="EXOSOME COMPLEX COMPONENT"/>
    <property type="match status" value="1"/>
</dbReference>
<dbReference type="PANTHER" id="PTHR11953:SF0">
    <property type="entry name" value="EXOSOME COMPLEX COMPONENT RRP41"/>
    <property type="match status" value="1"/>
</dbReference>
<dbReference type="Pfam" id="PF01138">
    <property type="entry name" value="RNase_PH"/>
    <property type="match status" value="1"/>
</dbReference>
<dbReference type="Pfam" id="PF03725">
    <property type="entry name" value="RNase_PH_C"/>
    <property type="match status" value="1"/>
</dbReference>
<dbReference type="SUPFAM" id="SSF55666">
    <property type="entry name" value="Ribonuclease PH domain 2-like"/>
    <property type="match status" value="1"/>
</dbReference>
<dbReference type="SUPFAM" id="SSF54211">
    <property type="entry name" value="Ribosomal protein S5 domain 2-like"/>
    <property type="match status" value="1"/>
</dbReference>
<dbReference type="PROSITE" id="PS01277">
    <property type="entry name" value="RIBONUCLEASE_PH"/>
    <property type="match status" value="1"/>
</dbReference>